<gene>
    <name type="primary">RPL36B</name>
    <name type="ordered locus">At3g53740</name>
    <name type="ORF">F5K20_40</name>
</gene>
<proteinExistence type="inferred from homology"/>
<reference key="1">
    <citation type="journal article" date="2000" name="Nature">
        <title>Sequence and analysis of chromosome 3 of the plant Arabidopsis thaliana.</title>
        <authorList>
            <person name="Salanoubat M."/>
            <person name="Lemcke K."/>
            <person name="Rieger M."/>
            <person name="Ansorge W."/>
            <person name="Unseld M."/>
            <person name="Fartmann B."/>
            <person name="Valle G."/>
            <person name="Bloecker H."/>
            <person name="Perez-Alonso M."/>
            <person name="Obermaier B."/>
            <person name="Delseny M."/>
            <person name="Boutry M."/>
            <person name="Grivell L.A."/>
            <person name="Mache R."/>
            <person name="Puigdomenech P."/>
            <person name="De Simone V."/>
            <person name="Choisne N."/>
            <person name="Artiguenave F."/>
            <person name="Robert C."/>
            <person name="Brottier P."/>
            <person name="Wincker P."/>
            <person name="Cattolico L."/>
            <person name="Weissenbach J."/>
            <person name="Saurin W."/>
            <person name="Quetier F."/>
            <person name="Schaefer M."/>
            <person name="Mueller-Auer S."/>
            <person name="Gabel C."/>
            <person name="Fuchs M."/>
            <person name="Benes V."/>
            <person name="Wurmbach E."/>
            <person name="Drzonek H."/>
            <person name="Erfle H."/>
            <person name="Jordan N."/>
            <person name="Bangert S."/>
            <person name="Wiedelmann R."/>
            <person name="Kranz H."/>
            <person name="Voss H."/>
            <person name="Holland R."/>
            <person name="Brandt P."/>
            <person name="Nyakatura G."/>
            <person name="Vezzi A."/>
            <person name="D'Angelo M."/>
            <person name="Pallavicini A."/>
            <person name="Toppo S."/>
            <person name="Simionati B."/>
            <person name="Conrad A."/>
            <person name="Hornischer K."/>
            <person name="Kauer G."/>
            <person name="Loehnert T.-H."/>
            <person name="Nordsiek G."/>
            <person name="Reichelt J."/>
            <person name="Scharfe M."/>
            <person name="Schoen O."/>
            <person name="Bargues M."/>
            <person name="Terol J."/>
            <person name="Climent J."/>
            <person name="Navarro P."/>
            <person name="Collado C."/>
            <person name="Perez-Perez A."/>
            <person name="Ottenwaelder B."/>
            <person name="Duchemin D."/>
            <person name="Cooke R."/>
            <person name="Laudie M."/>
            <person name="Berger-Llauro C."/>
            <person name="Purnelle B."/>
            <person name="Masuy D."/>
            <person name="de Haan M."/>
            <person name="Maarse A.C."/>
            <person name="Alcaraz J.-P."/>
            <person name="Cottet A."/>
            <person name="Casacuberta E."/>
            <person name="Monfort A."/>
            <person name="Argiriou A."/>
            <person name="Flores M."/>
            <person name="Liguori R."/>
            <person name="Vitale D."/>
            <person name="Mannhaupt G."/>
            <person name="Haase D."/>
            <person name="Schoof H."/>
            <person name="Rudd S."/>
            <person name="Zaccaria P."/>
            <person name="Mewes H.-W."/>
            <person name="Mayer K.F.X."/>
            <person name="Kaul S."/>
            <person name="Town C.D."/>
            <person name="Koo H.L."/>
            <person name="Tallon L.J."/>
            <person name="Jenkins J."/>
            <person name="Rooney T."/>
            <person name="Rizzo M."/>
            <person name="Walts A."/>
            <person name="Utterback T."/>
            <person name="Fujii C.Y."/>
            <person name="Shea T.P."/>
            <person name="Creasy T.H."/>
            <person name="Haas B."/>
            <person name="Maiti R."/>
            <person name="Wu D."/>
            <person name="Peterson J."/>
            <person name="Van Aken S."/>
            <person name="Pai G."/>
            <person name="Militscher J."/>
            <person name="Sellers P."/>
            <person name="Gill J.E."/>
            <person name="Feldblyum T.V."/>
            <person name="Preuss D."/>
            <person name="Lin X."/>
            <person name="Nierman W.C."/>
            <person name="Salzberg S.L."/>
            <person name="White O."/>
            <person name="Venter J.C."/>
            <person name="Fraser C.M."/>
            <person name="Kaneko T."/>
            <person name="Nakamura Y."/>
            <person name="Sato S."/>
            <person name="Kato T."/>
            <person name="Asamizu E."/>
            <person name="Sasamoto S."/>
            <person name="Kimura T."/>
            <person name="Idesawa K."/>
            <person name="Kawashima K."/>
            <person name="Kishida Y."/>
            <person name="Kiyokawa C."/>
            <person name="Kohara M."/>
            <person name="Matsumoto M."/>
            <person name="Matsuno A."/>
            <person name="Muraki A."/>
            <person name="Nakayama S."/>
            <person name="Nakazaki N."/>
            <person name="Shinpo S."/>
            <person name="Takeuchi C."/>
            <person name="Wada T."/>
            <person name="Watanabe A."/>
            <person name="Yamada M."/>
            <person name="Yasuda M."/>
            <person name="Tabata S."/>
        </authorList>
    </citation>
    <scope>NUCLEOTIDE SEQUENCE [LARGE SCALE GENOMIC DNA]</scope>
    <source>
        <strain>cv. Columbia</strain>
    </source>
</reference>
<reference key="2">
    <citation type="journal article" date="2017" name="Plant J.">
        <title>Araport11: a complete reannotation of the Arabidopsis thaliana reference genome.</title>
        <authorList>
            <person name="Cheng C.Y."/>
            <person name="Krishnakumar V."/>
            <person name="Chan A.P."/>
            <person name="Thibaud-Nissen F."/>
            <person name="Schobel S."/>
            <person name="Town C.D."/>
        </authorList>
    </citation>
    <scope>GENOME REANNOTATION</scope>
    <source>
        <strain>cv. Columbia</strain>
    </source>
</reference>
<reference key="3">
    <citation type="journal article" date="2003" name="Science">
        <title>Empirical analysis of transcriptional activity in the Arabidopsis genome.</title>
        <authorList>
            <person name="Yamada K."/>
            <person name="Lim J."/>
            <person name="Dale J.M."/>
            <person name="Chen H."/>
            <person name="Shinn P."/>
            <person name="Palm C.J."/>
            <person name="Southwick A.M."/>
            <person name="Wu H.C."/>
            <person name="Kim C.J."/>
            <person name="Nguyen M."/>
            <person name="Pham P.K."/>
            <person name="Cheuk R.F."/>
            <person name="Karlin-Newmann G."/>
            <person name="Liu S.X."/>
            <person name="Lam B."/>
            <person name="Sakano H."/>
            <person name="Wu T."/>
            <person name="Yu G."/>
            <person name="Miranda M."/>
            <person name="Quach H.L."/>
            <person name="Tripp M."/>
            <person name="Chang C.H."/>
            <person name="Lee J.M."/>
            <person name="Toriumi M.J."/>
            <person name="Chan M.M."/>
            <person name="Tang C.C."/>
            <person name="Onodera C.S."/>
            <person name="Deng J.M."/>
            <person name="Akiyama K."/>
            <person name="Ansari Y."/>
            <person name="Arakawa T."/>
            <person name="Banh J."/>
            <person name="Banno F."/>
            <person name="Bowser L."/>
            <person name="Brooks S.Y."/>
            <person name="Carninci P."/>
            <person name="Chao Q."/>
            <person name="Choy N."/>
            <person name="Enju A."/>
            <person name="Goldsmith A.D."/>
            <person name="Gurjal M."/>
            <person name="Hansen N.F."/>
            <person name="Hayashizaki Y."/>
            <person name="Johnson-Hopson C."/>
            <person name="Hsuan V.W."/>
            <person name="Iida K."/>
            <person name="Karnes M."/>
            <person name="Khan S."/>
            <person name="Koesema E."/>
            <person name="Ishida J."/>
            <person name="Jiang P.X."/>
            <person name="Jones T."/>
            <person name="Kawai J."/>
            <person name="Kamiya A."/>
            <person name="Meyers C."/>
            <person name="Nakajima M."/>
            <person name="Narusaka M."/>
            <person name="Seki M."/>
            <person name="Sakurai T."/>
            <person name="Satou M."/>
            <person name="Tamse R."/>
            <person name="Vaysberg M."/>
            <person name="Wallender E.K."/>
            <person name="Wong C."/>
            <person name="Yamamura Y."/>
            <person name="Yuan S."/>
            <person name="Shinozaki K."/>
            <person name="Davis R.W."/>
            <person name="Theologis A."/>
            <person name="Ecker J.R."/>
        </authorList>
    </citation>
    <scope>NUCLEOTIDE SEQUENCE [LARGE SCALE MRNA] (ISOFORM 1)</scope>
    <source>
        <strain>cv. Columbia</strain>
    </source>
</reference>
<reference key="4">
    <citation type="submission" date="2002-03" db="EMBL/GenBank/DDBJ databases">
        <title>Full-length cDNA from Arabidopsis thaliana.</title>
        <authorList>
            <person name="Brover V.V."/>
            <person name="Troukhan M.E."/>
            <person name="Alexandrov N.A."/>
            <person name="Lu Y.-P."/>
            <person name="Flavell R.B."/>
            <person name="Feldmann K.A."/>
        </authorList>
    </citation>
    <scope>NUCLEOTIDE SEQUENCE [LARGE SCALE MRNA] (ISOFORM 2)</scope>
</reference>
<reference key="5">
    <citation type="journal article" date="2001" name="Plant Physiol.">
        <title>The organization of cytoplasmic ribosomal protein genes in the Arabidopsis genome.</title>
        <authorList>
            <person name="Barakat A."/>
            <person name="Szick-Miranda K."/>
            <person name="Chang I.-F."/>
            <person name="Guyot R."/>
            <person name="Blanc G."/>
            <person name="Cooke R."/>
            <person name="Delseny M."/>
            <person name="Bailey-Serres J."/>
        </authorList>
    </citation>
    <scope>GENE FAMILY ORGANIZATION</scope>
    <scope>NOMENCLATURE</scope>
</reference>
<reference key="6">
    <citation type="journal article" date="2023" name="Plant Cell">
        <title>An updated nomenclature for plant ribosomal protein genes.</title>
        <authorList>
            <person name="Scarpin M.R."/>
            <person name="Busche M."/>
            <person name="Martinez R.E."/>
            <person name="Harper L.C."/>
            <person name="Reiser L."/>
            <person name="Szakonyi D."/>
            <person name="Merchante C."/>
            <person name="Lan T."/>
            <person name="Xiong W."/>
            <person name="Mo B."/>
            <person name="Tang G."/>
            <person name="Chen X."/>
            <person name="Bailey-Serres J."/>
            <person name="Browning K.S."/>
            <person name="Brunkard J.O."/>
        </authorList>
    </citation>
    <scope>NOMENCLATURE</scope>
</reference>
<protein>
    <recommendedName>
        <fullName evidence="2">Large ribosomal subunit protein eL36y</fullName>
    </recommendedName>
    <alternativeName>
        <fullName>60S ribosomal protein L36-2</fullName>
    </alternativeName>
</protein>
<dbReference type="EMBL" id="AL132960">
    <property type="protein sequence ID" value="CAB88336.1"/>
    <property type="molecule type" value="Genomic_DNA"/>
</dbReference>
<dbReference type="EMBL" id="CP002686">
    <property type="protein sequence ID" value="AEE79134.1"/>
    <property type="molecule type" value="Genomic_DNA"/>
</dbReference>
<dbReference type="EMBL" id="CP002686">
    <property type="protein sequence ID" value="AEE79135.1"/>
    <property type="molecule type" value="Genomic_DNA"/>
</dbReference>
<dbReference type="EMBL" id="CP002686">
    <property type="protein sequence ID" value="AEE79136.1"/>
    <property type="molecule type" value="Genomic_DNA"/>
</dbReference>
<dbReference type="EMBL" id="CP002686">
    <property type="protein sequence ID" value="AEE79137.1"/>
    <property type="molecule type" value="Genomic_DNA"/>
</dbReference>
<dbReference type="EMBL" id="AY062791">
    <property type="protein sequence ID" value="AAL32869.1"/>
    <property type="molecule type" value="mRNA"/>
</dbReference>
<dbReference type="EMBL" id="AY081579">
    <property type="protein sequence ID" value="AAM10141.1"/>
    <property type="molecule type" value="mRNA"/>
</dbReference>
<dbReference type="EMBL" id="AY086677">
    <property type="protein sequence ID" value="AAM63733.1"/>
    <property type="molecule type" value="mRNA"/>
</dbReference>
<dbReference type="PIR" id="T45914">
    <property type="entry name" value="T45914"/>
</dbReference>
<dbReference type="RefSeq" id="NP_001030855.1">
    <molecule id="Q9M352-1"/>
    <property type="nucleotide sequence ID" value="NM_001035778.3"/>
</dbReference>
<dbReference type="RefSeq" id="NP_001078279.1">
    <molecule id="Q9M352-1"/>
    <property type="nucleotide sequence ID" value="NM_001084810.2"/>
</dbReference>
<dbReference type="RefSeq" id="NP_566987.1">
    <molecule id="Q9M352-2"/>
    <property type="nucleotide sequence ID" value="NM_115234.2"/>
</dbReference>
<dbReference type="RefSeq" id="NP_850697.1">
    <molecule id="Q9M352-1"/>
    <property type="nucleotide sequence ID" value="NM_180366.4"/>
</dbReference>
<dbReference type="SMR" id="Q9M352"/>
<dbReference type="BioGRID" id="9858">
    <property type="interactions" value="159"/>
</dbReference>
<dbReference type="FunCoup" id="Q9M352">
    <property type="interactions" value="2762"/>
</dbReference>
<dbReference type="STRING" id="3702.Q9M352"/>
<dbReference type="PaxDb" id="3702-AT3G53740.4"/>
<dbReference type="ProteomicsDB" id="237028">
    <molecule id="Q9M352-1"/>
</dbReference>
<dbReference type="EnsemblPlants" id="AT3G53740.1">
    <molecule id="Q9M352-2"/>
    <property type="protein sequence ID" value="AT3G53740.1"/>
    <property type="gene ID" value="AT3G53740"/>
</dbReference>
<dbReference type="EnsemblPlants" id="AT3G53740.2">
    <molecule id="Q9M352-1"/>
    <property type="protein sequence ID" value="AT3G53740.2"/>
    <property type="gene ID" value="AT3G53740"/>
</dbReference>
<dbReference type="EnsemblPlants" id="AT3G53740.3">
    <molecule id="Q9M352-1"/>
    <property type="protein sequence ID" value="AT3G53740.3"/>
    <property type="gene ID" value="AT3G53740"/>
</dbReference>
<dbReference type="EnsemblPlants" id="AT3G53740.4">
    <molecule id="Q9M352-1"/>
    <property type="protein sequence ID" value="AT3G53740.4"/>
    <property type="gene ID" value="AT3G53740"/>
</dbReference>
<dbReference type="GeneID" id="824541"/>
<dbReference type="Gramene" id="AT3G53740.1">
    <molecule id="Q9M352-2"/>
    <property type="protein sequence ID" value="AT3G53740.1"/>
    <property type="gene ID" value="AT3G53740"/>
</dbReference>
<dbReference type="Gramene" id="AT3G53740.2">
    <molecule id="Q9M352-1"/>
    <property type="protein sequence ID" value="AT3G53740.2"/>
    <property type="gene ID" value="AT3G53740"/>
</dbReference>
<dbReference type="Gramene" id="AT3G53740.3">
    <molecule id="Q9M352-1"/>
    <property type="protein sequence ID" value="AT3G53740.3"/>
    <property type="gene ID" value="AT3G53740"/>
</dbReference>
<dbReference type="Gramene" id="AT3G53740.4">
    <molecule id="Q9M352-1"/>
    <property type="protein sequence ID" value="AT3G53740.4"/>
    <property type="gene ID" value="AT3G53740"/>
</dbReference>
<dbReference type="KEGG" id="ath:AT3G53740"/>
<dbReference type="Araport" id="AT3G53740"/>
<dbReference type="TAIR" id="AT3G53740"/>
<dbReference type="eggNOG" id="KOG3452">
    <property type="taxonomic scope" value="Eukaryota"/>
</dbReference>
<dbReference type="HOGENOM" id="CLU_140672_0_0_1"/>
<dbReference type="InParanoid" id="Q9M352"/>
<dbReference type="OMA" id="NKGHKTE"/>
<dbReference type="OrthoDB" id="25649at2759"/>
<dbReference type="PhylomeDB" id="Q9M352"/>
<dbReference type="PRO" id="PR:Q9M352"/>
<dbReference type="Proteomes" id="UP000006548">
    <property type="component" value="Chromosome 3"/>
</dbReference>
<dbReference type="ExpressionAtlas" id="Q9M352">
    <property type="expression patterns" value="baseline and differential"/>
</dbReference>
<dbReference type="GO" id="GO:0005829">
    <property type="term" value="C:cytosol"/>
    <property type="evidence" value="ECO:0007005"/>
    <property type="project" value="TAIR"/>
</dbReference>
<dbReference type="GO" id="GO:0022625">
    <property type="term" value="C:cytosolic large ribosomal subunit"/>
    <property type="evidence" value="ECO:0007005"/>
    <property type="project" value="TAIR"/>
</dbReference>
<dbReference type="GO" id="GO:0022626">
    <property type="term" value="C:cytosolic ribosome"/>
    <property type="evidence" value="ECO:0007005"/>
    <property type="project" value="TAIR"/>
</dbReference>
<dbReference type="GO" id="GO:0000325">
    <property type="term" value="C:plant-type vacuole"/>
    <property type="evidence" value="ECO:0007005"/>
    <property type="project" value="TAIR"/>
</dbReference>
<dbReference type="GO" id="GO:0003735">
    <property type="term" value="F:structural constituent of ribosome"/>
    <property type="evidence" value="ECO:0000314"/>
    <property type="project" value="CAFA"/>
</dbReference>
<dbReference type="GO" id="GO:0006412">
    <property type="term" value="P:translation"/>
    <property type="evidence" value="ECO:0007669"/>
    <property type="project" value="InterPro"/>
</dbReference>
<dbReference type="FunFam" id="1.10.10.1760:FF:000001">
    <property type="entry name" value="60S ribosomal protein L36"/>
    <property type="match status" value="1"/>
</dbReference>
<dbReference type="Gene3D" id="1.10.10.1760">
    <property type="entry name" value="60S ribosomal protein L36"/>
    <property type="match status" value="1"/>
</dbReference>
<dbReference type="InterPro" id="IPR000509">
    <property type="entry name" value="Ribosomal_eL36"/>
</dbReference>
<dbReference type="InterPro" id="IPR038097">
    <property type="entry name" value="Ribosomal_eL36_sf"/>
</dbReference>
<dbReference type="PANTHER" id="PTHR10114">
    <property type="entry name" value="60S RIBOSOMAL PROTEIN L36"/>
    <property type="match status" value="1"/>
</dbReference>
<dbReference type="Pfam" id="PF01158">
    <property type="entry name" value="Ribosomal_L36e"/>
    <property type="match status" value="1"/>
</dbReference>
<dbReference type="PROSITE" id="PS01190">
    <property type="entry name" value="RIBOSOMAL_L36E"/>
    <property type="match status" value="1"/>
</dbReference>
<feature type="chain" id="PRO_0000195013" description="Large ribosomal subunit protein eL36y">
    <location>
        <begin position="1"/>
        <end position="112"/>
    </location>
</feature>
<feature type="region of interest" description="Disordered" evidence="1">
    <location>
        <begin position="79"/>
        <end position="112"/>
    </location>
</feature>
<feature type="compositionally biased region" description="Basic residues" evidence="1">
    <location>
        <begin position="79"/>
        <end position="88"/>
    </location>
</feature>
<feature type="compositionally biased region" description="Gly residues" evidence="1">
    <location>
        <begin position="102"/>
        <end position="112"/>
    </location>
</feature>
<feature type="splice variant" id="VSP_019715" description="In isoform 2." evidence="3">
    <location>
        <begin position="67"/>
        <end position="75"/>
    </location>
</feature>
<name>RL362_ARATH</name>
<keyword id="KW-0025">Alternative splicing</keyword>
<keyword id="KW-1185">Reference proteome</keyword>
<keyword id="KW-0687">Ribonucleoprotein</keyword>
<keyword id="KW-0689">Ribosomal protein</keyword>
<evidence type="ECO:0000256" key="1">
    <source>
        <dbReference type="SAM" id="MobiDB-lite"/>
    </source>
</evidence>
<evidence type="ECO:0000303" key="2">
    <source>
    </source>
</evidence>
<evidence type="ECO:0000303" key="3">
    <source ref="4"/>
</evidence>
<evidence type="ECO:0000305" key="4"/>
<accession>Q9M352</accession>
<accession>Q8L5U3</accession>
<organism>
    <name type="scientific">Arabidopsis thaliana</name>
    <name type="common">Mouse-ear cress</name>
    <dbReference type="NCBI Taxonomy" id="3702"/>
    <lineage>
        <taxon>Eukaryota</taxon>
        <taxon>Viridiplantae</taxon>
        <taxon>Streptophyta</taxon>
        <taxon>Embryophyta</taxon>
        <taxon>Tracheophyta</taxon>
        <taxon>Spermatophyta</taxon>
        <taxon>Magnoliopsida</taxon>
        <taxon>eudicotyledons</taxon>
        <taxon>Gunneridae</taxon>
        <taxon>Pentapetalae</taxon>
        <taxon>rosids</taxon>
        <taxon>malvids</taxon>
        <taxon>Brassicales</taxon>
        <taxon>Brassicaceae</taxon>
        <taxon>Camelineae</taxon>
        <taxon>Arabidopsis</taxon>
    </lineage>
</organism>
<comment type="alternative products">
    <event type="alternative splicing"/>
    <isoform>
        <id>Q9M352-1</id>
        <name>1</name>
        <sequence type="displayed"/>
    </isoform>
    <isoform>
        <id>Q9M352-2</id>
        <name>2</name>
        <sequence type="described" ref="VSP_019715"/>
    </isoform>
</comment>
<comment type="similarity">
    <text evidence="4">Belongs to the eukaryotic ribosomal protein eL36 family.</text>
</comment>
<sequence length="112" mass="12676">MTTPQVKTGLFVGLNKGHVVTRRELAPRPRSRKGKTSKRTIFIRNLIKEVAGQAPYEKRITELLKVGKDKRALKVAKRKLGTHKRAKRKREEMSSVLRKMRSGGGGATEKKK</sequence>